<dbReference type="EMBL" id="CU928145">
    <property type="protein sequence ID" value="CAU96044.1"/>
    <property type="molecule type" value="Genomic_DNA"/>
</dbReference>
<dbReference type="RefSeq" id="WP_000272188.1">
    <property type="nucleotide sequence ID" value="NZ_CP028304.1"/>
</dbReference>
<dbReference type="SMR" id="B7LGM5"/>
<dbReference type="KEGG" id="eck:EC55989_0158"/>
<dbReference type="HOGENOM" id="CLU_136774_0_0_6"/>
<dbReference type="Proteomes" id="UP000000746">
    <property type="component" value="Chromosome"/>
</dbReference>
<dbReference type="HAMAP" id="MF_01519">
    <property type="entry name" value="UPF0325"/>
    <property type="match status" value="1"/>
</dbReference>
<dbReference type="InterPro" id="IPR020911">
    <property type="entry name" value="UPF0325"/>
</dbReference>
<dbReference type="NCBIfam" id="NF010213">
    <property type="entry name" value="PRK13677.1"/>
    <property type="match status" value="1"/>
</dbReference>
<dbReference type="Pfam" id="PF11944">
    <property type="entry name" value="DUF3461"/>
    <property type="match status" value="1"/>
</dbReference>
<feature type="chain" id="PRO_1000185093" description="UPF0325 protein YaeH">
    <location>
        <begin position="1"/>
        <end position="128"/>
    </location>
</feature>
<keyword id="KW-1185">Reference proteome</keyword>
<evidence type="ECO:0000255" key="1">
    <source>
        <dbReference type="HAMAP-Rule" id="MF_01519"/>
    </source>
</evidence>
<gene>
    <name evidence="1" type="primary">yaeH</name>
    <name type="ordered locus">EC55989_0158</name>
</gene>
<name>YAEH_ECO55</name>
<sequence>MYDNLKSLGITNPEEIDRYSLRQEANNDILKIYFQKDKGEFFAKSVKFKYPRQRKTVVADGVGQGYKEVQEISPNLRYIIDELDQICQRDRSEVDLKRKILDDLRHLESVVTNKISEIEADLEKLTRK</sequence>
<accession>B7LGM5</accession>
<protein>
    <recommendedName>
        <fullName evidence="1">UPF0325 protein YaeH</fullName>
    </recommendedName>
</protein>
<proteinExistence type="inferred from homology"/>
<reference key="1">
    <citation type="journal article" date="2009" name="PLoS Genet.">
        <title>Organised genome dynamics in the Escherichia coli species results in highly diverse adaptive paths.</title>
        <authorList>
            <person name="Touchon M."/>
            <person name="Hoede C."/>
            <person name="Tenaillon O."/>
            <person name="Barbe V."/>
            <person name="Baeriswyl S."/>
            <person name="Bidet P."/>
            <person name="Bingen E."/>
            <person name="Bonacorsi S."/>
            <person name="Bouchier C."/>
            <person name="Bouvet O."/>
            <person name="Calteau A."/>
            <person name="Chiapello H."/>
            <person name="Clermont O."/>
            <person name="Cruveiller S."/>
            <person name="Danchin A."/>
            <person name="Diard M."/>
            <person name="Dossat C."/>
            <person name="Karoui M.E."/>
            <person name="Frapy E."/>
            <person name="Garry L."/>
            <person name="Ghigo J.M."/>
            <person name="Gilles A.M."/>
            <person name="Johnson J."/>
            <person name="Le Bouguenec C."/>
            <person name="Lescat M."/>
            <person name="Mangenot S."/>
            <person name="Martinez-Jehanne V."/>
            <person name="Matic I."/>
            <person name="Nassif X."/>
            <person name="Oztas S."/>
            <person name="Petit M.A."/>
            <person name="Pichon C."/>
            <person name="Rouy Z."/>
            <person name="Ruf C.S."/>
            <person name="Schneider D."/>
            <person name="Tourret J."/>
            <person name="Vacherie B."/>
            <person name="Vallenet D."/>
            <person name="Medigue C."/>
            <person name="Rocha E.P.C."/>
            <person name="Denamur E."/>
        </authorList>
    </citation>
    <scope>NUCLEOTIDE SEQUENCE [LARGE SCALE GENOMIC DNA]</scope>
    <source>
        <strain>55989 / EAEC</strain>
    </source>
</reference>
<organism>
    <name type="scientific">Escherichia coli (strain 55989 / EAEC)</name>
    <dbReference type="NCBI Taxonomy" id="585055"/>
    <lineage>
        <taxon>Bacteria</taxon>
        <taxon>Pseudomonadati</taxon>
        <taxon>Pseudomonadota</taxon>
        <taxon>Gammaproteobacteria</taxon>
        <taxon>Enterobacterales</taxon>
        <taxon>Enterobacteriaceae</taxon>
        <taxon>Escherichia</taxon>
    </lineage>
</organism>
<comment type="similarity">
    <text evidence="1">Belongs to the UPF0325 family.</text>
</comment>